<comment type="function">
    <text>Apoprotein for the two 4Fe-4S centers FA and FB of photosystem I (PSI); essential for photochemical activity. FB is the terminal electron acceptor of PSI, donating electrons to ferredoxin. The C-terminus interacts with PsaA/B/D and helps assemble the protein into the PSI complex. Required for binding of PsaD and PsaE to PSI. PSI is a plastocyanin/cytochrome c6-ferredoxin oxidoreductase, converting photonic excitation into a charge separation, which transfers an electron from the donor P700 chlorophyll pair to the spectroscopically characterized acceptors A0, A1, FX, FA and FB in turn.</text>
</comment>
<comment type="catalytic activity">
    <reaction evidence="1">
        <text>reduced [plastocyanin] + hnu + oxidized [2Fe-2S]-[ferredoxin] = oxidized [plastocyanin] + reduced [2Fe-2S]-[ferredoxin]</text>
        <dbReference type="Rhea" id="RHEA:30407"/>
        <dbReference type="Rhea" id="RHEA-COMP:10000"/>
        <dbReference type="Rhea" id="RHEA-COMP:10001"/>
        <dbReference type="Rhea" id="RHEA-COMP:10039"/>
        <dbReference type="Rhea" id="RHEA-COMP:10040"/>
        <dbReference type="ChEBI" id="CHEBI:29036"/>
        <dbReference type="ChEBI" id="CHEBI:30212"/>
        <dbReference type="ChEBI" id="CHEBI:33737"/>
        <dbReference type="ChEBI" id="CHEBI:33738"/>
        <dbReference type="ChEBI" id="CHEBI:49552"/>
        <dbReference type="EC" id="1.97.1.12"/>
    </reaction>
</comment>
<comment type="cofactor">
    <cofactor evidence="1">
        <name>[4Fe-4S] cluster</name>
        <dbReference type="ChEBI" id="CHEBI:49883"/>
    </cofactor>
    <text evidence="1">Binds 2 [4Fe-4S] clusters. Cluster 2 is most probably the spectroscopically characterized electron acceptor FA and cluster 1 is most probably FB.</text>
</comment>
<comment type="subunit">
    <text evidence="1">The eukaryotic PSI reaction center is composed of at least 11 subunits.</text>
</comment>
<comment type="subcellular location">
    <subcellularLocation>
        <location evidence="1">Plastid</location>
        <location evidence="1">Chloroplast thylakoid membrane</location>
        <topology evidence="1">Peripheral membrane protein</topology>
        <orientation evidence="1">Stromal side</orientation>
    </subcellularLocation>
</comment>
<keyword id="KW-0002">3D-structure</keyword>
<keyword id="KW-0004">4Fe-4S</keyword>
<keyword id="KW-0150">Chloroplast</keyword>
<keyword id="KW-0249">Electron transport</keyword>
<keyword id="KW-0408">Iron</keyword>
<keyword id="KW-0411">Iron-sulfur</keyword>
<keyword id="KW-0472">Membrane</keyword>
<keyword id="KW-0479">Metal-binding</keyword>
<keyword id="KW-0560">Oxidoreductase</keyword>
<keyword id="KW-0602">Photosynthesis</keyword>
<keyword id="KW-0603">Photosystem I</keyword>
<keyword id="KW-0934">Plastid</keyword>
<keyword id="KW-0677">Repeat</keyword>
<keyword id="KW-0793">Thylakoid</keyword>
<keyword id="KW-0813">Transport</keyword>
<organism>
    <name type="scientific">Rhodomonas salina</name>
    <name type="common">Cryptomonas salina</name>
    <dbReference type="NCBI Taxonomy" id="52970"/>
    <lineage>
        <taxon>Eukaryota</taxon>
        <taxon>Cryptophyceae</taxon>
        <taxon>Pyrenomonadales</taxon>
        <taxon>Pyrenomonadaceae</taxon>
        <taxon>Rhodomonas</taxon>
    </lineage>
</organism>
<dbReference type="EC" id="1.97.1.12" evidence="1"/>
<dbReference type="EMBL" id="EF508371">
    <property type="protein sequence ID" value="ABO70734.1"/>
    <property type="molecule type" value="Genomic_DNA"/>
</dbReference>
<dbReference type="RefSeq" id="YP_001293507.1">
    <property type="nucleotide sequence ID" value="NC_009573.1"/>
</dbReference>
<dbReference type="PDB" id="8WM6">
    <property type="method" value="EM"/>
    <property type="resolution" value="2.70 A"/>
    <property type="chains" value="C=1-81"/>
</dbReference>
<dbReference type="PDB" id="8WMJ">
    <property type="method" value="EM"/>
    <property type="resolution" value="3.00 A"/>
    <property type="chains" value="C=1-81"/>
</dbReference>
<dbReference type="PDB" id="8WMV">
    <property type="method" value="EM"/>
    <property type="resolution" value="2.94 A"/>
    <property type="chains" value="C=1-81"/>
</dbReference>
<dbReference type="PDB" id="8WMW">
    <property type="method" value="EM"/>
    <property type="resolution" value="3.30 A"/>
    <property type="chains" value="C=1-81"/>
</dbReference>
<dbReference type="PDBsum" id="8WM6"/>
<dbReference type="PDBsum" id="8WMJ"/>
<dbReference type="PDBsum" id="8WMV"/>
<dbReference type="PDBsum" id="8WMW"/>
<dbReference type="EMDB" id="EMD-37642"/>
<dbReference type="EMDB" id="EMD-37654"/>
<dbReference type="EMDB" id="EMD-37659"/>
<dbReference type="EMDB" id="EMD-37660"/>
<dbReference type="SMR" id="A6MVS8"/>
<dbReference type="GeneID" id="5228585"/>
<dbReference type="GO" id="GO:0009535">
    <property type="term" value="C:chloroplast thylakoid membrane"/>
    <property type="evidence" value="ECO:0007669"/>
    <property type="project" value="UniProtKB-SubCell"/>
</dbReference>
<dbReference type="GO" id="GO:0009522">
    <property type="term" value="C:photosystem I"/>
    <property type="evidence" value="ECO:0007669"/>
    <property type="project" value="UniProtKB-KW"/>
</dbReference>
<dbReference type="GO" id="GO:0051539">
    <property type="term" value="F:4 iron, 4 sulfur cluster binding"/>
    <property type="evidence" value="ECO:0007669"/>
    <property type="project" value="UniProtKB-KW"/>
</dbReference>
<dbReference type="GO" id="GO:0009055">
    <property type="term" value="F:electron transfer activity"/>
    <property type="evidence" value="ECO:0007669"/>
    <property type="project" value="UniProtKB-UniRule"/>
</dbReference>
<dbReference type="GO" id="GO:0046872">
    <property type="term" value="F:metal ion binding"/>
    <property type="evidence" value="ECO:0007669"/>
    <property type="project" value="UniProtKB-KW"/>
</dbReference>
<dbReference type="GO" id="GO:0016491">
    <property type="term" value="F:oxidoreductase activity"/>
    <property type="evidence" value="ECO:0007669"/>
    <property type="project" value="UniProtKB-KW"/>
</dbReference>
<dbReference type="GO" id="GO:0009773">
    <property type="term" value="P:photosynthetic electron transport in photosystem I"/>
    <property type="evidence" value="ECO:0007669"/>
    <property type="project" value="InterPro"/>
</dbReference>
<dbReference type="FunFam" id="3.30.70.20:FF:000001">
    <property type="entry name" value="Photosystem I iron-sulfur center"/>
    <property type="match status" value="1"/>
</dbReference>
<dbReference type="Gene3D" id="3.30.70.20">
    <property type="match status" value="1"/>
</dbReference>
<dbReference type="HAMAP" id="MF_01303">
    <property type="entry name" value="PSI_PsaC"/>
    <property type="match status" value="1"/>
</dbReference>
<dbReference type="InterPro" id="IPR017896">
    <property type="entry name" value="4Fe4S_Fe-S-bd"/>
</dbReference>
<dbReference type="InterPro" id="IPR017900">
    <property type="entry name" value="4Fe4S_Fe_S_CS"/>
</dbReference>
<dbReference type="InterPro" id="IPR050157">
    <property type="entry name" value="PSI_iron-sulfur_center"/>
</dbReference>
<dbReference type="InterPro" id="IPR017491">
    <property type="entry name" value="PSI_PsaC"/>
</dbReference>
<dbReference type="NCBIfam" id="TIGR03048">
    <property type="entry name" value="PS_I_psaC"/>
    <property type="match status" value="1"/>
</dbReference>
<dbReference type="PANTHER" id="PTHR24960:SF79">
    <property type="entry name" value="PHOTOSYSTEM I IRON-SULFUR CENTER"/>
    <property type="match status" value="1"/>
</dbReference>
<dbReference type="PANTHER" id="PTHR24960">
    <property type="entry name" value="PHOTOSYSTEM I IRON-SULFUR CENTER-RELATED"/>
    <property type="match status" value="1"/>
</dbReference>
<dbReference type="Pfam" id="PF12838">
    <property type="entry name" value="Fer4_7"/>
    <property type="match status" value="1"/>
</dbReference>
<dbReference type="SUPFAM" id="SSF54862">
    <property type="entry name" value="4Fe-4S ferredoxins"/>
    <property type="match status" value="1"/>
</dbReference>
<dbReference type="PROSITE" id="PS00198">
    <property type="entry name" value="4FE4S_FER_1"/>
    <property type="match status" value="2"/>
</dbReference>
<dbReference type="PROSITE" id="PS51379">
    <property type="entry name" value="4FE4S_FER_2"/>
    <property type="match status" value="2"/>
</dbReference>
<protein>
    <recommendedName>
        <fullName evidence="1">Photosystem I iron-sulfur center</fullName>
        <ecNumber evidence="1">1.97.1.12</ecNumber>
    </recommendedName>
    <alternativeName>
        <fullName evidence="1">9 kDa polypeptide</fullName>
    </alternativeName>
    <alternativeName>
        <fullName evidence="1">PSI-C</fullName>
    </alternativeName>
    <alternativeName>
        <fullName evidence="1">Photosystem I subunit VII</fullName>
    </alternativeName>
    <alternativeName>
        <fullName evidence="1">PsaC</fullName>
    </alternativeName>
</protein>
<accession>A6MVS8</accession>
<sequence length="81" mass="8750">MSHSVKVYDTCIGCTQCVRACPCDVLEMVSWDGCKAGQIASAPRTEDCIGCKRCETACPTDFLSVRVYLGGETTRSMGLAY</sequence>
<reference key="1">
    <citation type="journal article" date="2007" name="Mol. Biol. Evol.">
        <title>Plastid genome sequence of the cryptophyte alga Rhodomonas salina CCMP1319: lateral transfer of putative DNA replication machinery and a test of chromist plastid phylogeny.</title>
        <authorList>
            <person name="Khan H."/>
            <person name="Parks N."/>
            <person name="Kozera C."/>
            <person name="Curtis B.A."/>
            <person name="Parsons B.J."/>
            <person name="Bowman S."/>
            <person name="Archibald J.M."/>
        </authorList>
    </citation>
    <scope>NUCLEOTIDE SEQUENCE [LARGE SCALE GENOMIC DNA]</scope>
    <source>
        <strain>CCMP1319 / NEPCC76 / CS-174</strain>
    </source>
</reference>
<geneLocation type="chloroplast"/>
<feature type="chain" id="PRO_0000322046" description="Photosystem I iron-sulfur center">
    <location>
        <begin position="1"/>
        <end position="81"/>
    </location>
</feature>
<feature type="domain" description="4Fe-4S ferredoxin-type 1" evidence="1">
    <location>
        <begin position="2"/>
        <end position="31"/>
    </location>
</feature>
<feature type="domain" description="4Fe-4S ferredoxin-type 2" evidence="1">
    <location>
        <begin position="39"/>
        <end position="68"/>
    </location>
</feature>
<feature type="binding site" evidence="1">
    <location>
        <position position="11"/>
    </location>
    <ligand>
        <name>[4Fe-4S] cluster</name>
        <dbReference type="ChEBI" id="CHEBI:49883"/>
        <label>1</label>
    </ligand>
</feature>
<feature type="binding site" evidence="1">
    <location>
        <position position="14"/>
    </location>
    <ligand>
        <name>[4Fe-4S] cluster</name>
        <dbReference type="ChEBI" id="CHEBI:49883"/>
        <label>1</label>
    </ligand>
</feature>
<feature type="binding site" evidence="1">
    <location>
        <position position="17"/>
    </location>
    <ligand>
        <name>[4Fe-4S] cluster</name>
        <dbReference type="ChEBI" id="CHEBI:49883"/>
        <label>1</label>
    </ligand>
</feature>
<feature type="binding site" evidence="1">
    <location>
        <position position="21"/>
    </location>
    <ligand>
        <name>[4Fe-4S] cluster</name>
        <dbReference type="ChEBI" id="CHEBI:49883"/>
        <label>2</label>
    </ligand>
</feature>
<feature type="binding site" evidence="1">
    <location>
        <position position="48"/>
    </location>
    <ligand>
        <name>[4Fe-4S] cluster</name>
        <dbReference type="ChEBI" id="CHEBI:49883"/>
        <label>2</label>
    </ligand>
</feature>
<feature type="binding site" evidence="1">
    <location>
        <position position="51"/>
    </location>
    <ligand>
        <name>[4Fe-4S] cluster</name>
        <dbReference type="ChEBI" id="CHEBI:49883"/>
        <label>2</label>
    </ligand>
</feature>
<feature type="binding site" evidence="1">
    <location>
        <position position="54"/>
    </location>
    <ligand>
        <name>[4Fe-4S] cluster</name>
        <dbReference type="ChEBI" id="CHEBI:49883"/>
        <label>2</label>
    </ligand>
</feature>
<feature type="binding site" evidence="1">
    <location>
        <position position="58"/>
    </location>
    <ligand>
        <name>[4Fe-4S] cluster</name>
        <dbReference type="ChEBI" id="CHEBI:49883"/>
        <label>1</label>
    </ligand>
</feature>
<feature type="strand" evidence="2">
    <location>
        <begin position="4"/>
        <end position="8"/>
    </location>
</feature>
<feature type="helix" evidence="2">
    <location>
        <begin position="16"/>
        <end position="20"/>
    </location>
</feature>
<feature type="strand" evidence="2">
    <location>
        <begin position="27"/>
        <end position="30"/>
    </location>
</feature>
<feature type="strand" evidence="2">
    <location>
        <begin position="32"/>
        <end position="34"/>
    </location>
</feature>
<feature type="strand" evidence="2">
    <location>
        <begin position="37"/>
        <end position="41"/>
    </location>
</feature>
<feature type="helix" evidence="2">
    <location>
        <begin position="45"/>
        <end position="47"/>
    </location>
</feature>
<feature type="helix" evidence="2">
    <location>
        <begin position="53"/>
        <end position="57"/>
    </location>
</feature>
<feature type="strand" evidence="2">
    <location>
        <begin position="60"/>
        <end position="62"/>
    </location>
</feature>
<feature type="strand" evidence="2">
    <location>
        <begin position="64"/>
        <end position="68"/>
    </location>
</feature>
<feature type="turn" evidence="2">
    <location>
        <begin position="74"/>
        <end position="78"/>
    </location>
</feature>
<gene>
    <name evidence="1" type="primary">psaC</name>
</gene>
<name>PSAC_RHDSA</name>
<proteinExistence type="evidence at protein level"/>
<evidence type="ECO:0000255" key="1">
    <source>
        <dbReference type="HAMAP-Rule" id="MF_01303"/>
    </source>
</evidence>
<evidence type="ECO:0007829" key="2">
    <source>
        <dbReference type="PDB" id="8WM6"/>
    </source>
</evidence>